<accession>A1UHV6</accession>
<gene>
    <name evidence="1" type="primary">uppP</name>
    <name type="ordered locus">Mkms_3220</name>
</gene>
<protein>
    <recommendedName>
        <fullName evidence="1">Undecaprenyl-diphosphatase</fullName>
        <ecNumber evidence="1">3.6.1.27</ecNumber>
    </recommendedName>
    <alternativeName>
        <fullName evidence="1">Bacitracin resistance protein</fullName>
    </alternativeName>
    <alternativeName>
        <fullName evidence="1">Undecaprenyl pyrophosphate phosphatase</fullName>
    </alternativeName>
</protein>
<name>UPPP_MYCSK</name>
<organism>
    <name type="scientific">Mycobacterium sp. (strain KMS)</name>
    <dbReference type="NCBI Taxonomy" id="189918"/>
    <lineage>
        <taxon>Bacteria</taxon>
        <taxon>Bacillati</taxon>
        <taxon>Actinomycetota</taxon>
        <taxon>Actinomycetes</taxon>
        <taxon>Mycobacteriales</taxon>
        <taxon>Mycobacteriaceae</taxon>
        <taxon>Mycobacterium</taxon>
    </lineage>
</organism>
<keyword id="KW-0046">Antibiotic resistance</keyword>
<keyword id="KW-1003">Cell membrane</keyword>
<keyword id="KW-0133">Cell shape</keyword>
<keyword id="KW-0961">Cell wall biogenesis/degradation</keyword>
<keyword id="KW-0378">Hydrolase</keyword>
<keyword id="KW-0472">Membrane</keyword>
<keyword id="KW-0573">Peptidoglycan synthesis</keyword>
<keyword id="KW-0812">Transmembrane</keyword>
<keyword id="KW-1133">Transmembrane helix</keyword>
<reference key="1">
    <citation type="submission" date="2006-12" db="EMBL/GenBank/DDBJ databases">
        <title>Complete sequence of chromosome of Mycobacterium sp. KMS.</title>
        <authorList>
            <consortium name="US DOE Joint Genome Institute"/>
            <person name="Copeland A."/>
            <person name="Lucas S."/>
            <person name="Lapidus A."/>
            <person name="Barry K."/>
            <person name="Detter J.C."/>
            <person name="Glavina del Rio T."/>
            <person name="Hammon N."/>
            <person name="Israni S."/>
            <person name="Dalin E."/>
            <person name="Tice H."/>
            <person name="Pitluck S."/>
            <person name="Kiss H."/>
            <person name="Brettin T."/>
            <person name="Bruce D."/>
            <person name="Han C."/>
            <person name="Tapia R."/>
            <person name="Gilna P."/>
            <person name="Schmutz J."/>
            <person name="Larimer F."/>
            <person name="Land M."/>
            <person name="Hauser L."/>
            <person name="Kyrpides N."/>
            <person name="Mikhailova N."/>
            <person name="Miller C.D."/>
            <person name="Richardson P."/>
        </authorList>
    </citation>
    <scope>NUCLEOTIDE SEQUENCE [LARGE SCALE GENOMIC DNA]</scope>
    <source>
        <strain>KMS</strain>
    </source>
</reference>
<proteinExistence type="inferred from homology"/>
<comment type="function">
    <text evidence="1">Catalyzes the dephosphorylation of undecaprenyl diphosphate (UPP). Confers resistance to bacitracin.</text>
</comment>
<comment type="catalytic activity">
    <reaction evidence="1">
        <text>di-trans,octa-cis-undecaprenyl diphosphate + H2O = di-trans,octa-cis-undecaprenyl phosphate + phosphate + H(+)</text>
        <dbReference type="Rhea" id="RHEA:28094"/>
        <dbReference type="ChEBI" id="CHEBI:15377"/>
        <dbReference type="ChEBI" id="CHEBI:15378"/>
        <dbReference type="ChEBI" id="CHEBI:43474"/>
        <dbReference type="ChEBI" id="CHEBI:58405"/>
        <dbReference type="ChEBI" id="CHEBI:60392"/>
        <dbReference type="EC" id="3.6.1.27"/>
    </reaction>
</comment>
<comment type="subcellular location">
    <subcellularLocation>
        <location evidence="1">Cell membrane</location>
        <topology evidence="1">Multi-pass membrane protein</topology>
    </subcellularLocation>
</comment>
<comment type="miscellaneous">
    <text>Bacitracin is thought to be involved in the inhibition of peptidoglycan synthesis by sequestering undecaprenyl diphosphate, thereby reducing the pool of lipid carrier available.</text>
</comment>
<comment type="similarity">
    <text evidence="1">Belongs to the UppP family.</text>
</comment>
<dbReference type="EC" id="3.6.1.27" evidence="1"/>
<dbReference type="EMBL" id="CP000518">
    <property type="protein sequence ID" value="ABL92414.1"/>
    <property type="molecule type" value="Genomic_DNA"/>
</dbReference>
<dbReference type="SMR" id="A1UHV6"/>
<dbReference type="STRING" id="189918.Mkms_3220"/>
<dbReference type="KEGG" id="mkm:Mkms_3220"/>
<dbReference type="HOGENOM" id="CLU_060296_1_0_11"/>
<dbReference type="OrthoDB" id="9808289at2"/>
<dbReference type="GO" id="GO:0005886">
    <property type="term" value="C:plasma membrane"/>
    <property type="evidence" value="ECO:0007669"/>
    <property type="project" value="UniProtKB-SubCell"/>
</dbReference>
<dbReference type="GO" id="GO:0050380">
    <property type="term" value="F:undecaprenyl-diphosphatase activity"/>
    <property type="evidence" value="ECO:0007669"/>
    <property type="project" value="UniProtKB-UniRule"/>
</dbReference>
<dbReference type="GO" id="GO:0071555">
    <property type="term" value="P:cell wall organization"/>
    <property type="evidence" value="ECO:0007669"/>
    <property type="project" value="UniProtKB-KW"/>
</dbReference>
<dbReference type="GO" id="GO:0009252">
    <property type="term" value="P:peptidoglycan biosynthetic process"/>
    <property type="evidence" value="ECO:0007669"/>
    <property type="project" value="UniProtKB-KW"/>
</dbReference>
<dbReference type="GO" id="GO:0008360">
    <property type="term" value="P:regulation of cell shape"/>
    <property type="evidence" value="ECO:0007669"/>
    <property type="project" value="UniProtKB-KW"/>
</dbReference>
<dbReference type="GO" id="GO:0046677">
    <property type="term" value="P:response to antibiotic"/>
    <property type="evidence" value="ECO:0007669"/>
    <property type="project" value="UniProtKB-UniRule"/>
</dbReference>
<dbReference type="HAMAP" id="MF_01006">
    <property type="entry name" value="Undec_diphosphatase"/>
    <property type="match status" value="1"/>
</dbReference>
<dbReference type="InterPro" id="IPR003824">
    <property type="entry name" value="UppP"/>
</dbReference>
<dbReference type="NCBIfam" id="NF001392">
    <property type="entry name" value="PRK00281.2-1"/>
    <property type="match status" value="1"/>
</dbReference>
<dbReference type="NCBIfam" id="TIGR00753">
    <property type="entry name" value="undec_PP_bacA"/>
    <property type="match status" value="1"/>
</dbReference>
<dbReference type="PANTHER" id="PTHR30622">
    <property type="entry name" value="UNDECAPRENYL-DIPHOSPHATASE"/>
    <property type="match status" value="1"/>
</dbReference>
<dbReference type="PANTHER" id="PTHR30622:SF4">
    <property type="entry name" value="UNDECAPRENYL-DIPHOSPHATASE"/>
    <property type="match status" value="1"/>
</dbReference>
<dbReference type="Pfam" id="PF02673">
    <property type="entry name" value="BacA"/>
    <property type="match status" value="1"/>
</dbReference>
<evidence type="ECO:0000255" key="1">
    <source>
        <dbReference type="HAMAP-Rule" id="MF_01006"/>
    </source>
</evidence>
<sequence>MSWLQVIVLAVVQGLTEFLPVSSSGHLAIVSRVFFDDDAGASFTAVTQLGTEVAVLVYFARDIGRIATAWFRGLRNPGRRDADYRLGWYVIIGTIPIGVIGLLLKDEIRTAARNLWAIAIALIVFSAVIAAAEYFGRQVRHVEQLTWRDGVIVGVAQCLALLPGVSRSGATISAGLFLGLDRELAARFGFLLAIPAVFASGLFSLPDAFAPVGEGMSATGPQLLVATVIAFVVGFAAVAWFLRFLVRHGMYWFVGYRVVLGVVVLILLSTGVVAAI</sequence>
<feature type="chain" id="PRO_0000290731" description="Undecaprenyl-diphosphatase">
    <location>
        <begin position="1"/>
        <end position="276"/>
    </location>
</feature>
<feature type="transmembrane region" description="Helical" evidence="1">
    <location>
        <begin position="1"/>
        <end position="21"/>
    </location>
</feature>
<feature type="transmembrane region" description="Helical" evidence="1">
    <location>
        <begin position="39"/>
        <end position="59"/>
    </location>
</feature>
<feature type="transmembrane region" description="Helical" evidence="1">
    <location>
        <begin position="84"/>
        <end position="104"/>
    </location>
</feature>
<feature type="transmembrane region" description="Helical" evidence="1">
    <location>
        <begin position="115"/>
        <end position="135"/>
    </location>
</feature>
<feature type="transmembrane region" description="Helical" evidence="1">
    <location>
        <begin position="159"/>
        <end position="179"/>
    </location>
</feature>
<feature type="transmembrane region" description="Helical" evidence="1">
    <location>
        <begin position="190"/>
        <end position="210"/>
    </location>
</feature>
<feature type="transmembrane region" description="Helical" evidence="1">
    <location>
        <begin position="222"/>
        <end position="242"/>
    </location>
</feature>
<feature type="transmembrane region" description="Helical" evidence="1">
    <location>
        <begin position="253"/>
        <end position="273"/>
    </location>
</feature>